<evidence type="ECO:0000255" key="1">
    <source>
        <dbReference type="HAMAP-Rule" id="MF_01013"/>
    </source>
</evidence>
<protein>
    <recommendedName>
        <fullName evidence="1">Imidazole glycerol phosphate synthase subunit HisF</fullName>
        <ecNumber evidence="1">4.3.2.10</ecNumber>
    </recommendedName>
    <alternativeName>
        <fullName evidence="1">IGP synthase cyclase subunit</fullName>
    </alternativeName>
    <alternativeName>
        <fullName evidence="1">IGP synthase subunit HisF</fullName>
    </alternativeName>
    <alternativeName>
        <fullName evidence="1">ImGP synthase subunit HisF</fullName>
        <shortName evidence="1">IGPS subunit HisF</shortName>
    </alternativeName>
</protein>
<sequence>MLAKRIIPCLDIKDGQTVKGTNFVNLRQAGDPVELGRTYSEQGADELVFLDITASHEGRKTFTDLVKRVAANINIPFTVGGGINELSDVDRLLNAGADKVSINSSAIRNPDLVDKIAKHFGSQVCVVAIDAKQTETGWKCYLNGGRIETDKYLFDWAKEVNNRGAGEILFTSMNHDGVKNGYANEALSTLADLLTIPVIASGGAGCMEHFRDTFAKGKADAALAASVFHFGEIKIPELKQYLCEQGINVRL</sequence>
<gene>
    <name evidence="1" type="primary">hisF</name>
    <name type="ordered locus">BVU_3853</name>
</gene>
<dbReference type="EC" id="4.3.2.10" evidence="1"/>
<dbReference type="EMBL" id="CP000139">
    <property type="protein sequence ID" value="ABR41456.1"/>
    <property type="molecule type" value="Genomic_DNA"/>
</dbReference>
<dbReference type="RefSeq" id="WP_005841210.1">
    <property type="nucleotide sequence ID" value="NZ_JANSWM010000043.1"/>
</dbReference>
<dbReference type="SMR" id="A6L6Z2"/>
<dbReference type="STRING" id="435590.BVU_3853"/>
<dbReference type="PaxDb" id="435590-BVU_3853"/>
<dbReference type="GeneID" id="5304812"/>
<dbReference type="KEGG" id="bvu:BVU_3853"/>
<dbReference type="eggNOG" id="COG0107">
    <property type="taxonomic scope" value="Bacteria"/>
</dbReference>
<dbReference type="HOGENOM" id="CLU_048577_4_0_10"/>
<dbReference type="BioCyc" id="BVUL435590:G1G59-3989-MONOMER"/>
<dbReference type="UniPathway" id="UPA00031">
    <property type="reaction ID" value="UER00010"/>
</dbReference>
<dbReference type="Proteomes" id="UP000002861">
    <property type="component" value="Chromosome"/>
</dbReference>
<dbReference type="GO" id="GO:0005737">
    <property type="term" value="C:cytoplasm"/>
    <property type="evidence" value="ECO:0007669"/>
    <property type="project" value="UniProtKB-SubCell"/>
</dbReference>
<dbReference type="GO" id="GO:0000107">
    <property type="term" value="F:imidazoleglycerol-phosphate synthase activity"/>
    <property type="evidence" value="ECO:0007669"/>
    <property type="project" value="UniProtKB-UniRule"/>
</dbReference>
<dbReference type="GO" id="GO:0016829">
    <property type="term" value="F:lyase activity"/>
    <property type="evidence" value="ECO:0007669"/>
    <property type="project" value="UniProtKB-KW"/>
</dbReference>
<dbReference type="GO" id="GO:0000105">
    <property type="term" value="P:L-histidine biosynthetic process"/>
    <property type="evidence" value="ECO:0007669"/>
    <property type="project" value="UniProtKB-UniRule"/>
</dbReference>
<dbReference type="CDD" id="cd04731">
    <property type="entry name" value="HisF"/>
    <property type="match status" value="1"/>
</dbReference>
<dbReference type="FunFam" id="3.20.20.70:FF:000006">
    <property type="entry name" value="Imidazole glycerol phosphate synthase subunit HisF"/>
    <property type="match status" value="1"/>
</dbReference>
<dbReference type="Gene3D" id="3.20.20.70">
    <property type="entry name" value="Aldolase class I"/>
    <property type="match status" value="1"/>
</dbReference>
<dbReference type="HAMAP" id="MF_01013">
    <property type="entry name" value="HisF"/>
    <property type="match status" value="1"/>
</dbReference>
<dbReference type="InterPro" id="IPR013785">
    <property type="entry name" value="Aldolase_TIM"/>
</dbReference>
<dbReference type="InterPro" id="IPR006062">
    <property type="entry name" value="His_biosynth"/>
</dbReference>
<dbReference type="InterPro" id="IPR004651">
    <property type="entry name" value="HisF"/>
</dbReference>
<dbReference type="InterPro" id="IPR050064">
    <property type="entry name" value="IGPS_HisA/HisF"/>
</dbReference>
<dbReference type="InterPro" id="IPR011060">
    <property type="entry name" value="RibuloseP-bd_barrel"/>
</dbReference>
<dbReference type="NCBIfam" id="TIGR00735">
    <property type="entry name" value="hisF"/>
    <property type="match status" value="1"/>
</dbReference>
<dbReference type="PANTHER" id="PTHR21235:SF2">
    <property type="entry name" value="IMIDAZOLE GLYCEROL PHOSPHATE SYNTHASE HISHF"/>
    <property type="match status" value="1"/>
</dbReference>
<dbReference type="PANTHER" id="PTHR21235">
    <property type="entry name" value="IMIDAZOLE GLYCEROL PHOSPHATE SYNTHASE SUBUNIT HISF/H IGP SYNTHASE SUBUNIT HISF/H"/>
    <property type="match status" value="1"/>
</dbReference>
<dbReference type="Pfam" id="PF00977">
    <property type="entry name" value="His_biosynth"/>
    <property type="match status" value="1"/>
</dbReference>
<dbReference type="SUPFAM" id="SSF51366">
    <property type="entry name" value="Ribulose-phoshate binding barrel"/>
    <property type="match status" value="1"/>
</dbReference>
<reference key="1">
    <citation type="journal article" date="2007" name="PLoS Biol.">
        <title>Evolution of symbiotic bacteria in the distal human intestine.</title>
        <authorList>
            <person name="Xu J."/>
            <person name="Mahowald M.A."/>
            <person name="Ley R.E."/>
            <person name="Lozupone C.A."/>
            <person name="Hamady M."/>
            <person name="Martens E.C."/>
            <person name="Henrissat B."/>
            <person name="Coutinho P.M."/>
            <person name="Minx P."/>
            <person name="Latreille P."/>
            <person name="Cordum H."/>
            <person name="Van Brunt A."/>
            <person name="Kim K."/>
            <person name="Fulton R.S."/>
            <person name="Fulton L.A."/>
            <person name="Clifton S.W."/>
            <person name="Wilson R.K."/>
            <person name="Knight R.D."/>
            <person name="Gordon J.I."/>
        </authorList>
    </citation>
    <scope>NUCLEOTIDE SEQUENCE [LARGE SCALE GENOMIC DNA]</scope>
    <source>
        <strain>ATCC 8482 / DSM 1447 / JCM 5826 / CCUG 4940 / NBRC 14291 / NCTC 11154</strain>
    </source>
</reference>
<comment type="function">
    <text evidence="1">IGPS catalyzes the conversion of PRFAR and glutamine to IGP, AICAR and glutamate. The HisF subunit catalyzes the cyclization activity that produces IGP and AICAR from PRFAR using the ammonia provided by the HisH subunit.</text>
</comment>
<comment type="catalytic activity">
    <reaction evidence="1">
        <text>5-[(5-phospho-1-deoxy-D-ribulos-1-ylimino)methylamino]-1-(5-phospho-beta-D-ribosyl)imidazole-4-carboxamide + L-glutamine = D-erythro-1-(imidazol-4-yl)glycerol 3-phosphate + 5-amino-1-(5-phospho-beta-D-ribosyl)imidazole-4-carboxamide + L-glutamate + H(+)</text>
        <dbReference type="Rhea" id="RHEA:24793"/>
        <dbReference type="ChEBI" id="CHEBI:15378"/>
        <dbReference type="ChEBI" id="CHEBI:29985"/>
        <dbReference type="ChEBI" id="CHEBI:58278"/>
        <dbReference type="ChEBI" id="CHEBI:58359"/>
        <dbReference type="ChEBI" id="CHEBI:58475"/>
        <dbReference type="ChEBI" id="CHEBI:58525"/>
        <dbReference type="EC" id="4.3.2.10"/>
    </reaction>
</comment>
<comment type="pathway">
    <text evidence="1">Amino-acid biosynthesis; L-histidine biosynthesis; L-histidine from 5-phospho-alpha-D-ribose 1-diphosphate: step 5/9.</text>
</comment>
<comment type="subunit">
    <text evidence="1">Heterodimer of HisH and HisF.</text>
</comment>
<comment type="subcellular location">
    <subcellularLocation>
        <location evidence="1">Cytoplasm</location>
    </subcellularLocation>
</comment>
<comment type="similarity">
    <text evidence="1">Belongs to the HisA/HisF family.</text>
</comment>
<name>HIS6_PHOV8</name>
<proteinExistence type="inferred from homology"/>
<feature type="chain" id="PRO_1000063028" description="Imidazole glycerol phosphate synthase subunit HisF">
    <location>
        <begin position="1"/>
        <end position="251"/>
    </location>
</feature>
<feature type="active site" evidence="1">
    <location>
        <position position="11"/>
    </location>
</feature>
<feature type="active site" evidence="1">
    <location>
        <position position="130"/>
    </location>
</feature>
<accession>A6L6Z2</accession>
<keyword id="KW-0028">Amino-acid biosynthesis</keyword>
<keyword id="KW-0963">Cytoplasm</keyword>
<keyword id="KW-0368">Histidine biosynthesis</keyword>
<keyword id="KW-0456">Lyase</keyword>
<organism>
    <name type="scientific">Phocaeicola vulgatus (strain ATCC 8482 / DSM 1447 / JCM 5826 / CCUG 4940 / NBRC 14291 / NCTC 11154)</name>
    <name type="common">Bacteroides vulgatus</name>
    <dbReference type="NCBI Taxonomy" id="435590"/>
    <lineage>
        <taxon>Bacteria</taxon>
        <taxon>Pseudomonadati</taxon>
        <taxon>Bacteroidota</taxon>
        <taxon>Bacteroidia</taxon>
        <taxon>Bacteroidales</taxon>
        <taxon>Bacteroidaceae</taxon>
        <taxon>Phocaeicola</taxon>
    </lineage>
</organism>